<comment type="catalytic activity">
    <reaction evidence="1">
        <text>(2R)-3-phosphoglycerate + ATP = (2R)-3-phospho-glyceroyl phosphate + ADP</text>
        <dbReference type="Rhea" id="RHEA:14801"/>
        <dbReference type="ChEBI" id="CHEBI:30616"/>
        <dbReference type="ChEBI" id="CHEBI:57604"/>
        <dbReference type="ChEBI" id="CHEBI:58272"/>
        <dbReference type="ChEBI" id="CHEBI:456216"/>
        <dbReference type="EC" id="2.7.2.3"/>
    </reaction>
</comment>
<comment type="pathway">
    <text evidence="1">Carbohydrate degradation; glycolysis; pyruvate from D-glyceraldehyde 3-phosphate: step 2/5.</text>
</comment>
<comment type="subunit">
    <text evidence="1">Monomer.</text>
</comment>
<comment type="subcellular location">
    <subcellularLocation>
        <location evidence="1">Cytoplasm</location>
    </subcellularLocation>
</comment>
<comment type="similarity">
    <text evidence="1">Belongs to the phosphoglycerate kinase family.</text>
</comment>
<gene>
    <name evidence="1" type="primary">pgk</name>
    <name type="ordered locus">Fphi_1357</name>
</gene>
<reference key="1">
    <citation type="submission" date="2007-12" db="EMBL/GenBank/DDBJ databases">
        <title>Complete sequence of chromosome of Francisella philomiragia subsp. philomiragia ATCC 25017.</title>
        <authorList>
            <consortium name="US DOE Joint Genome Institute"/>
            <person name="Copeland A."/>
            <person name="Lucas S."/>
            <person name="Lapidus A."/>
            <person name="Barry K."/>
            <person name="Detter J.C."/>
            <person name="Glavina del Rio T."/>
            <person name="Hammon N."/>
            <person name="Israni S."/>
            <person name="Dalin E."/>
            <person name="Tice H."/>
            <person name="Pitluck S."/>
            <person name="Chain P."/>
            <person name="Malfatti S."/>
            <person name="Shin M."/>
            <person name="Vergez L."/>
            <person name="Schmutz J."/>
            <person name="Larimer F."/>
            <person name="Land M."/>
            <person name="Hauser L."/>
            <person name="Richardson P."/>
        </authorList>
    </citation>
    <scope>NUCLEOTIDE SEQUENCE [LARGE SCALE GENOMIC DNA]</scope>
    <source>
        <strain>ATCC 25017 / CCUG 19701 / FSC 153 / O#319-036</strain>
    </source>
</reference>
<proteinExistence type="inferred from homology"/>
<evidence type="ECO:0000255" key="1">
    <source>
        <dbReference type="HAMAP-Rule" id="MF_00145"/>
    </source>
</evidence>
<keyword id="KW-0067">ATP-binding</keyword>
<keyword id="KW-0963">Cytoplasm</keyword>
<keyword id="KW-0324">Glycolysis</keyword>
<keyword id="KW-0418">Kinase</keyword>
<keyword id="KW-0547">Nucleotide-binding</keyword>
<keyword id="KW-0808">Transferase</keyword>
<dbReference type="EC" id="2.7.2.3" evidence="1"/>
<dbReference type="EMBL" id="CP000937">
    <property type="protein sequence ID" value="ABZ87582.1"/>
    <property type="molecule type" value="Genomic_DNA"/>
</dbReference>
<dbReference type="SMR" id="B0TY21"/>
<dbReference type="KEGG" id="fph:Fphi_1357"/>
<dbReference type="eggNOG" id="COG0126">
    <property type="taxonomic scope" value="Bacteria"/>
</dbReference>
<dbReference type="HOGENOM" id="CLU_025427_0_2_6"/>
<dbReference type="UniPathway" id="UPA00109">
    <property type="reaction ID" value="UER00185"/>
</dbReference>
<dbReference type="GO" id="GO:0005829">
    <property type="term" value="C:cytosol"/>
    <property type="evidence" value="ECO:0007669"/>
    <property type="project" value="TreeGrafter"/>
</dbReference>
<dbReference type="GO" id="GO:0043531">
    <property type="term" value="F:ADP binding"/>
    <property type="evidence" value="ECO:0007669"/>
    <property type="project" value="TreeGrafter"/>
</dbReference>
<dbReference type="GO" id="GO:0005524">
    <property type="term" value="F:ATP binding"/>
    <property type="evidence" value="ECO:0007669"/>
    <property type="project" value="UniProtKB-KW"/>
</dbReference>
<dbReference type="GO" id="GO:0004618">
    <property type="term" value="F:phosphoglycerate kinase activity"/>
    <property type="evidence" value="ECO:0007669"/>
    <property type="project" value="UniProtKB-UniRule"/>
</dbReference>
<dbReference type="GO" id="GO:0006094">
    <property type="term" value="P:gluconeogenesis"/>
    <property type="evidence" value="ECO:0007669"/>
    <property type="project" value="TreeGrafter"/>
</dbReference>
<dbReference type="GO" id="GO:0006096">
    <property type="term" value="P:glycolytic process"/>
    <property type="evidence" value="ECO:0007669"/>
    <property type="project" value="UniProtKB-UniRule"/>
</dbReference>
<dbReference type="FunFam" id="3.40.50.1260:FF:000001">
    <property type="entry name" value="Phosphoglycerate kinase"/>
    <property type="match status" value="1"/>
</dbReference>
<dbReference type="FunFam" id="3.40.50.1260:FF:000002">
    <property type="entry name" value="Phosphoglycerate kinase"/>
    <property type="match status" value="1"/>
</dbReference>
<dbReference type="Gene3D" id="3.40.50.1260">
    <property type="entry name" value="Phosphoglycerate kinase, N-terminal domain"/>
    <property type="match status" value="2"/>
</dbReference>
<dbReference type="HAMAP" id="MF_00145">
    <property type="entry name" value="Phosphoglyc_kinase"/>
    <property type="match status" value="1"/>
</dbReference>
<dbReference type="InterPro" id="IPR001576">
    <property type="entry name" value="Phosphoglycerate_kinase"/>
</dbReference>
<dbReference type="InterPro" id="IPR015911">
    <property type="entry name" value="Phosphoglycerate_kinase_CS"/>
</dbReference>
<dbReference type="InterPro" id="IPR015824">
    <property type="entry name" value="Phosphoglycerate_kinase_N"/>
</dbReference>
<dbReference type="InterPro" id="IPR036043">
    <property type="entry name" value="Phosphoglycerate_kinase_sf"/>
</dbReference>
<dbReference type="PANTHER" id="PTHR11406">
    <property type="entry name" value="PHOSPHOGLYCERATE KINASE"/>
    <property type="match status" value="1"/>
</dbReference>
<dbReference type="PANTHER" id="PTHR11406:SF23">
    <property type="entry name" value="PHOSPHOGLYCERATE KINASE 1, CHLOROPLASTIC-RELATED"/>
    <property type="match status" value="1"/>
</dbReference>
<dbReference type="Pfam" id="PF00162">
    <property type="entry name" value="PGK"/>
    <property type="match status" value="1"/>
</dbReference>
<dbReference type="PIRSF" id="PIRSF000724">
    <property type="entry name" value="Pgk"/>
    <property type="match status" value="1"/>
</dbReference>
<dbReference type="PRINTS" id="PR00477">
    <property type="entry name" value="PHGLYCKINASE"/>
</dbReference>
<dbReference type="SUPFAM" id="SSF53748">
    <property type="entry name" value="Phosphoglycerate kinase"/>
    <property type="match status" value="1"/>
</dbReference>
<dbReference type="PROSITE" id="PS00111">
    <property type="entry name" value="PGLYCERATE_KINASE"/>
    <property type="match status" value="1"/>
</dbReference>
<name>PGK_FRAP2</name>
<sequence length="392" mass="41958">MSFLTLKDVDLKNKKVLVRVDFNVPVKDGKVTSKVRIEAAIPTIQYILDQGGAVILMSHLGRPTEGEYDSQFSLEPVAEVLSQIIKKPVRFAKDWLNGVDAKAGEIVMCDNVRFNKGEKKSDDELSKKIASLGDVFVMDAFATAHRAQASTYGVAKYVPVACAGLLLANEIKALEKALKAPKKPMAAIVGGSKVSTKLSVLHNLLDKVEILIVGGGIANTFIKAEGFNIGNSLYEEDLVGEAKDILAKAKELGVNIPVPVDVRVAKELSENAVAVVKNVADVADDEMILDIGPKSERNIAELLKSANTILWNGPVGVFEFDNFAEGTKALSLAIAESDAFSVAGGGDTIAAIEKFDIKDKVSYISTAGGAFLEFLEGKKLPAVEILKEKATI</sequence>
<organism>
    <name type="scientific">Francisella philomiragia subsp. philomiragia (strain ATCC 25017 / CCUG 19701 / FSC 153 / O#319-036)</name>
    <dbReference type="NCBI Taxonomy" id="484022"/>
    <lineage>
        <taxon>Bacteria</taxon>
        <taxon>Pseudomonadati</taxon>
        <taxon>Pseudomonadota</taxon>
        <taxon>Gammaproteobacteria</taxon>
        <taxon>Thiotrichales</taxon>
        <taxon>Francisellaceae</taxon>
        <taxon>Francisella</taxon>
    </lineage>
</organism>
<accession>B0TY21</accession>
<protein>
    <recommendedName>
        <fullName evidence="1">Phosphoglycerate kinase</fullName>
        <ecNumber evidence="1">2.7.2.3</ecNumber>
    </recommendedName>
</protein>
<feature type="chain" id="PRO_1000076588" description="Phosphoglycerate kinase">
    <location>
        <begin position="1"/>
        <end position="392"/>
    </location>
</feature>
<feature type="binding site" evidence="1">
    <location>
        <begin position="21"/>
        <end position="23"/>
    </location>
    <ligand>
        <name>substrate</name>
    </ligand>
</feature>
<feature type="binding site" evidence="1">
    <location>
        <position position="36"/>
    </location>
    <ligand>
        <name>substrate</name>
    </ligand>
</feature>
<feature type="binding site" evidence="1">
    <location>
        <begin position="59"/>
        <end position="62"/>
    </location>
    <ligand>
        <name>substrate</name>
    </ligand>
</feature>
<feature type="binding site" evidence="1">
    <location>
        <position position="113"/>
    </location>
    <ligand>
        <name>substrate</name>
    </ligand>
</feature>
<feature type="binding site" evidence="1">
    <location>
        <position position="146"/>
    </location>
    <ligand>
        <name>substrate</name>
    </ligand>
</feature>
<feature type="binding site" evidence="1">
    <location>
        <position position="197"/>
    </location>
    <ligand>
        <name>ATP</name>
        <dbReference type="ChEBI" id="CHEBI:30616"/>
    </ligand>
</feature>
<feature type="binding site" evidence="1">
    <location>
        <position position="319"/>
    </location>
    <ligand>
        <name>ATP</name>
        <dbReference type="ChEBI" id="CHEBI:30616"/>
    </ligand>
</feature>
<feature type="binding site" evidence="1">
    <location>
        <begin position="345"/>
        <end position="348"/>
    </location>
    <ligand>
        <name>ATP</name>
        <dbReference type="ChEBI" id="CHEBI:30616"/>
    </ligand>
</feature>